<name>RL10_PHOLL</name>
<accession>Q7N9A6</accession>
<keyword id="KW-1185">Reference proteome</keyword>
<keyword id="KW-0687">Ribonucleoprotein</keyword>
<keyword id="KW-0689">Ribosomal protein</keyword>
<keyword id="KW-0694">RNA-binding</keyword>
<keyword id="KW-0699">rRNA-binding</keyword>
<proteinExistence type="inferred from homology"/>
<organism>
    <name type="scientific">Photorhabdus laumondii subsp. laumondii (strain DSM 15139 / CIP 105565 / TT01)</name>
    <name type="common">Photorhabdus luminescens subsp. laumondii</name>
    <dbReference type="NCBI Taxonomy" id="243265"/>
    <lineage>
        <taxon>Bacteria</taxon>
        <taxon>Pseudomonadati</taxon>
        <taxon>Pseudomonadota</taxon>
        <taxon>Gammaproteobacteria</taxon>
        <taxon>Enterobacterales</taxon>
        <taxon>Morganellaceae</taxon>
        <taxon>Photorhabdus</taxon>
    </lineage>
</organism>
<reference key="1">
    <citation type="journal article" date="2003" name="Nat. Biotechnol.">
        <title>The genome sequence of the entomopathogenic bacterium Photorhabdus luminescens.</title>
        <authorList>
            <person name="Duchaud E."/>
            <person name="Rusniok C."/>
            <person name="Frangeul L."/>
            <person name="Buchrieser C."/>
            <person name="Givaudan A."/>
            <person name="Taourit S."/>
            <person name="Bocs S."/>
            <person name="Boursaux-Eude C."/>
            <person name="Chandler M."/>
            <person name="Charles J.-F."/>
            <person name="Dassa E."/>
            <person name="Derose R."/>
            <person name="Derzelle S."/>
            <person name="Freyssinet G."/>
            <person name="Gaudriault S."/>
            <person name="Medigue C."/>
            <person name="Lanois A."/>
            <person name="Powell K."/>
            <person name="Siguier P."/>
            <person name="Vincent R."/>
            <person name="Wingate V."/>
            <person name="Zouine M."/>
            <person name="Glaser P."/>
            <person name="Boemare N."/>
            <person name="Danchin A."/>
            <person name="Kunst F."/>
        </authorList>
    </citation>
    <scope>NUCLEOTIDE SEQUENCE [LARGE SCALE GENOMIC DNA]</scope>
    <source>
        <strain>DSM 15139 / CIP 105565 / TT01</strain>
    </source>
</reference>
<evidence type="ECO:0000255" key="1">
    <source>
        <dbReference type="HAMAP-Rule" id="MF_00362"/>
    </source>
</evidence>
<evidence type="ECO:0000305" key="2"/>
<gene>
    <name evidence="1" type="primary">rplJ</name>
    <name type="ordered locus">plu0437</name>
</gene>
<protein>
    <recommendedName>
        <fullName evidence="1">Large ribosomal subunit protein uL10</fullName>
    </recommendedName>
    <alternativeName>
        <fullName evidence="2">50S ribosomal protein L10</fullName>
    </alternativeName>
</protein>
<sequence>MALNLQDKQAIVAEVSEVAKGALSAVVADSRGVTVDKMTELRKAGREAGVYIRVVRNTLIRRAVEGTAYECLKEAFVGPTLIAFSNEHPGAAARLFKEFAKANPAFEIKAAAFEGEFIPAANIDRLATLPTYEEAIARLMSTMKEAVAGKLVRTLAALRELREQKEVA</sequence>
<comment type="function">
    <text evidence="1">Forms part of the ribosomal stalk, playing a central role in the interaction of the ribosome with GTP-bound translation factors.</text>
</comment>
<comment type="subunit">
    <text evidence="1">Part of the ribosomal stalk of the 50S ribosomal subunit. The N-terminus interacts with L11 and the large rRNA to form the base of the stalk. The C-terminus forms an elongated spine to which L12 dimers bind in a sequential fashion forming a multimeric L10(L12)X complex.</text>
</comment>
<comment type="similarity">
    <text evidence="1">Belongs to the universal ribosomal protein uL10 family.</text>
</comment>
<feature type="chain" id="PRO_0000154683" description="Large ribosomal subunit protein uL10">
    <location>
        <begin position="1"/>
        <end position="168"/>
    </location>
</feature>
<dbReference type="EMBL" id="BX571860">
    <property type="protein sequence ID" value="CAE12732.1"/>
    <property type="molecule type" value="Genomic_DNA"/>
</dbReference>
<dbReference type="RefSeq" id="WP_011144823.1">
    <property type="nucleotide sequence ID" value="NC_005126.1"/>
</dbReference>
<dbReference type="STRING" id="243265.plu0437"/>
<dbReference type="GeneID" id="48846723"/>
<dbReference type="KEGG" id="plu:plu0437"/>
<dbReference type="eggNOG" id="COG0244">
    <property type="taxonomic scope" value="Bacteria"/>
</dbReference>
<dbReference type="HOGENOM" id="CLU_092227_0_2_6"/>
<dbReference type="OrthoDB" id="9808307at2"/>
<dbReference type="Proteomes" id="UP000002514">
    <property type="component" value="Chromosome"/>
</dbReference>
<dbReference type="GO" id="GO:0015934">
    <property type="term" value="C:large ribosomal subunit"/>
    <property type="evidence" value="ECO:0007669"/>
    <property type="project" value="InterPro"/>
</dbReference>
<dbReference type="GO" id="GO:0070180">
    <property type="term" value="F:large ribosomal subunit rRNA binding"/>
    <property type="evidence" value="ECO:0007669"/>
    <property type="project" value="UniProtKB-UniRule"/>
</dbReference>
<dbReference type="GO" id="GO:0003735">
    <property type="term" value="F:structural constituent of ribosome"/>
    <property type="evidence" value="ECO:0007669"/>
    <property type="project" value="InterPro"/>
</dbReference>
<dbReference type="GO" id="GO:0006412">
    <property type="term" value="P:translation"/>
    <property type="evidence" value="ECO:0007669"/>
    <property type="project" value="UniProtKB-UniRule"/>
</dbReference>
<dbReference type="CDD" id="cd05797">
    <property type="entry name" value="Ribosomal_L10"/>
    <property type="match status" value="1"/>
</dbReference>
<dbReference type="FunFam" id="3.30.70.1730:FF:000001">
    <property type="entry name" value="50S ribosomal protein L10"/>
    <property type="match status" value="1"/>
</dbReference>
<dbReference type="Gene3D" id="3.30.70.1730">
    <property type="match status" value="1"/>
</dbReference>
<dbReference type="Gene3D" id="6.10.250.2350">
    <property type="match status" value="1"/>
</dbReference>
<dbReference type="HAMAP" id="MF_00362">
    <property type="entry name" value="Ribosomal_uL10"/>
    <property type="match status" value="1"/>
</dbReference>
<dbReference type="InterPro" id="IPR001790">
    <property type="entry name" value="Ribosomal_uL10"/>
</dbReference>
<dbReference type="InterPro" id="IPR043141">
    <property type="entry name" value="Ribosomal_uL10-like_sf"/>
</dbReference>
<dbReference type="InterPro" id="IPR022973">
    <property type="entry name" value="Ribosomal_uL10_bac"/>
</dbReference>
<dbReference type="InterPro" id="IPR047865">
    <property type="entry name" value="Ribosomal_uL10_bac_type"/>
</dbReference>
<dbReference type="InterPro" id="IPR002363">
    <property type="entry name" value="Ribosomal_uL10_CS_bac"/>
</dbReference>
<dbReference type="NCBIfam" id="NF000955">
    <property type="entry name" value="PRK00099.1-1"/>
    <property type="match status" value="1"/>
</dbReference>
<dbReference type="PANTHER" id="PTHR11560">
    <property type="entry name" value="39S RIBOSOMAL PROTEIN L10, MITOCHONDRIAL"/>
    <property type="match status" value="1"/>
</dbReference>
<dbReference type="Pfam" id="PF00466">
    <property type="entry name" value="Ribosomal_L10"/>
    <property type="match status" value="1"/>
</dbReference>
<dbReference type="SUPFAM" id="SSF160369">
    <property type="entry name" value="Ribosomal protein L10-like"/>
    <property type="match status" value="1"/>
</dbReference>
<dbReference type="PROSITE" id="PS01109">
    <property type="entry name" value="RIBOSOMAL_L10"/>
    <property type="match status" value="1"/>
</dbReference>